<gene>
    <name evidence="1" type="primary">tilS</name>
    <name type="ordered locus">CYA_2591</name>
</gene>
<comment type="function">
    <text evidence="1">Ligates lysine onto the cytidine present at position 34 of the AUA codon-specific tRNA(Ile) that contains the anticodon CAU, in an ATP-dependent manner. Cytidine is converted to lysidine, thus changing the amino acid specificity of the tRNA from methionine to isoleucine.</text>
</comment>
<comment type="catalytic activity">
    <reaction evidence="1">
        <text>cytidine(34) in tRNA(Ile2) + L-lysine + ATP = lysidine(34) in tRNA(Ile2) + AMP + diphosphate + H(+)</text>
        <dbReference type="Rhea" id="RHEA:43744"/>
        <dbReference type="Rhea" id="RHEA-COMP:10625"/>
        <dbReference type="Rhea" id="RHEA-COMP:10670"/>
        <dbReference type="ChEBI" id="CHEBI:15378"/>
        <dbReference type="ChEBI" id="CHEBI:30616"/>
        <dbReference type="ChEBI" id="CHEBI:32551"/>
        <dbReference type="ChEBI" id="CHEBI:33019"/>
        <dbReference type="ChEBI" id="CHEBI:82748"/>
        <dbReference type="ChEBI" id="CHEBI:83665"/>
        <dbReference type="ChEBI" id="CHEBI:456215"/>
        <dbReference type="EC" id="6.3.4.19"/>
    </reaction>
</comment>
<comment type="subcellular location">
    <subcellularLocation>
        <location evidence="1">Cytoplasm</location>
    </subcellularLocation>
</comment>
<comment type="domain">
    <text>The N-terminal region contains the highly conserved SGGXDS motif, predicted to be a P-loop motif involved in ATP binding.</text>
</comment>
<comment type="similarity">
    <text evidence="1">Belongs to the tRNA(Ile)-lysidine synthase family.</text>
</comment>
<feature type="chain" id="PRO_1000065630" description="tRNA(Ile)-lysidine synthase">
    <location>
        <begin position="1"/>
        <end position="336"/>
    </location>
</feature>
<feature type="binding site" evidence="1">
    <location>
        <begin position="32"/>
        <end position="37"/>
    </location>
    <ligand>
        <name>ATP</name>
        <dbReference type="ChEBI" id="CHEBI:30616"/>
    </ligand>
</feature>
<name>TILS_SYNJA</name>
<evidence type="ECO:0000255" key="1">
    <source>
        <dbReference type="HAMAP-Rule" id="MF_01161"/>
    </source>
</evidence>
<reference key="1">
    <citation type="journal article" date="2007" name="ISME J.">
        <title>Population level functional diversity in a microbial community revealed by comparative genomic and metagenomic analyses.</title>
        <authorList>
            <person name="Bhaya D."/>
            <person name="Grossman A.R."/>
            <person name="Steunou A.-S."/>
            <person name="Khuri N."/>
            <person name="Cohan F.M."/>
            <person name="Hamamura N."/>
            <person name="Melendrez M.C."/>
            <person name="Bateson M.M."/>
            <person name="Ward D.M."/>
            <person name="Heidelberg J.F."/>
        </authorList>
    </citation>
    <scope>NUCLEOTIDE SEQUENCE [LARGE SCALE GENOMIC DNA]</scope>
    <source>
        <strain>JA-3-3Ab</strain>
    </source>
</reference>
<dbReference type="EC" id="6.3.4.19" evidence="1"/>
<dbReference type="EMBL" id="CP000239">
    <property type="protein sequence ID" value="ABD00708.1"/>
    <property type="molecule type" value="Genomic_DNA"/>
</dbReference>
<dbReference type="RefSeq" id="WP_011431381.1">
    <property type="nucleotide sequence ID" value="NC_007775.1"/>
</dbReference>
<dbReference type="SMR" id="Q2JRN8"/>
<dbReference type="STRING" id="321327.CYA_2591"/>
<dbReference type="KEGG" id="cya:CYA_2591"/>
<dbReference type="eggNOG" id="COG0037">
    <property type="taxonomic scope" value="Bacteria"/>
</dbReference>
<dbReference type="HOGENOM" id="CLU_018869_0_0_3"/>
<dbReference type="OrthoDB" id="9807403at2"/>
<dbReference type="Proteomes" id="UP000008818">
    <property type="component" value="Chromosome"/>
</dbReference>
<dbReference type="GO" id="GO:0005737">
    <property type="term" value="C:cytoplasm"/>
    <property type="evidence" value="ECO:0007669"/>
    <property type="project" value="UniProtKB-SubCell"/>
</dbReference>
<dbReference type="GO" id="GO:0005524">
    <property type="term" value="F:ATP binding"/>
    <property type="evidence" value="ECO:0007669"/>
    <property type="project" value="UniProtKB-UniRule"/>
</dbReference>
<dbReference type="GO" id="GO:0032267">
    <property type="term" value="F:tRNA(Ile)-lysidine synthase activity"/>
    <property type="evidence" value="ECO:0007669"/>
    <property type="project" value="UniProtKB-EC"/>
</dbReference>
<dbReference type="GO" id="GO:0006400">
    <property type="term" value="P:tRNA modification"/>
    <property type="evidence" value="ECO:0007669"/>
    <property type="project" value="UniProtKB-UniRule"/>
</dbReference>
<dbReference type="CDD" id="cd01992">
    <property type="entry name" value="TilS_N"/>
    <property type="match status" value="1"/>
</dbReference>
<dbReference type="Gene3D" id="1.20.59.20">
    <property type="match status" value="1"/>
</dbReference>
<dbReference type="Gene3D" id="3.40.50.620">
    <property type="entry name" value="HUPs"/>
    <property type="match status" value="1"/>
</dbReference>
<dbReference type="HAMAP" id="MF_01161">
    <property type="entry name" value="tRNA_Ile_lys_synt"/>
    <property type="match status" value="1"/>
</dbReference>
<dbReference type="InterPro" id="IPR014729">
    <property type="entry name" value="Rossmann-like_a/b/a_fold"/>
</dbReference>
<dbReference type="InterPro" id="IPR011063">
    <property type="entry name" value="TilS/TtcA_N"/>
</dbReference>
<dbReference type="InterPro" id="IPR012094">
    <property type="entry name" value="tRNA_Ile_lys_synt"/>
</dbReference>
<dbReference type="InterPro" id="IPR012795">
    <property type="entry name" value="tRNA_Ile_lys_synt_N"/>
</dbReference>
<dbReference type="NCBIfam" id="TIGR02432">
    <property type="entry name" value="lysidine_TilS_N"/>
    <property type="match status" value="1"/>
</dbReference>
<dbReference type="PANTHER" id="PTHR43033">
    <property type="entry name" value="TRNA(ILE)-LYSIDINE SYNTHASE-RELATED"/>
    <property type="match status" value="1"/>
</dbReference>
<dbReference type="PANTHER" id="PTHR43033:SF1">
    <property type="entry name" value="TRNA(ILE)-LYSIDINE SYNTHASE-RELATED"/>
    <property type="match status" value="1"/>
</dbReference>
<dbReference type="Pfam" id="PF01171">
    <property type="entry name" value="ATP_bind_3"/>
    <property type="match status" value="1"/>
</dbReference>
<dbReference type="SUPFAM" id="SSF52402">
    <property type="entry name" value="Adenine nucleotide alpha hydrolases-like"/>
    <property type="match status" value="1"/>
</dbReference>
<dbReference type="SUPFAM" id="SSF82829">
    <property type="entry name" value="MesJ substrate recognition domain-like"/>
    <property type="match status" value="1"/>
</dbReference>
<protein>
    <recommendedName>
        <fullName evidence="1">tRNA(Ile)-lysidine synthase</fullName>
        <ecNumber evidence="1">6.3.4.19</ecNumber>
    </recommendedName>
    <alternativeName>
        <fullName evidence="1">tRNA(Ile)-2-lysyl-cytidine synthase</fullName>
    </alternativeName>
    <alternativeName>
        <fullName evidence="1">tRNA(Ile)-lysidine synthetase</fullName>
    </alternativeName>
</protein>
<proteinExistence type="inferred from homology"/>
<accession>Q2JRN8</accession>
<sequence length="336" mass="38641">MARLSPLHLRVQCAIRERQLLRPGQRLLVAFSGGQDSFSLLQILRDLQPRWRWQIFVLHCDHRWSADETACAQFLQGWLQQQGLPHAVETADPIRWDEAGARAWRYQQLDKWARTWSCEAVATGHTASDRAETFLWNLLRGTGAAGLVSLDWQRRLDERDPTSAWLVRPLLGLSRWETEEFCRQYQLPVWPDRSNQDLAHGRNRLRLEVMPYLKQHFNPQLEAALNRAATLLQAEHELVVAQAAQLWLQVYEPALPGLRRDPLRAAPLALQRQVMFQFLSLLLPHHPTFEQVEAGIRLLKAGRRSRSPDYPGGGWLEVRGDCVVWVAASQPASFVP</sequence>
<organism>
    <name type="scientific">Synechococcus sp. (strain JA-3-3Ab)</name>
    <name type="common">Cyanobacteria bacterium Yellowstone A-Prime</name>
    <dbReference type="NCBI Taxonomy" id="321327"/>
    <lineage>
        <taxon>Bacteria</taxon>
        <taxon>Bacillati</taxon>
        <taxon>Cyanobacteriota</taxon>
        <taxon>Cyanophyceae</taxon>
        <taxon>Synechococcales</taxon>
        <taxon>Synechococcaceae</taxon>
        <taxon>Synechococcus</taxon>
    </lineage>
</organism>
<keyword id="KW-0067">ATP-binding</keyword>
<keyword id="KW-0963">Cytoplasm</keyword>
<keyword id="KW-0436">Ligase</keyword>
<keyword id="KW-0547">Nucleotide-binding</keyword>
<keyword id="KW-0819">tRNA processing</keyword>